<name>RSMC_SALAR</name>
<organism>
    <name type="scientific">Salmonella arizonae (strain ATCC BAA-731 / CDC346-86 / RSK2980)</name>
    <dbReference type="NCBI Taxonomy" id="41514"/>
    <lineage>
        <taxon>Bacteria</taxon>
        <taxon>Pseudomonadati</taxon>
        <taxon>Pseudomonadota</taxon>
        <taxon>Gammaproteobacteria</taxon>
        <taxon>Enterobacterales</taxon>
        <taxon>Enterobacteriaceae</taxon>
        <taxon>Salmonella</taxon>
    </lineage>
</organism>
<gene>
    <name evidence="1" type="primary">rsmC</name>
    <name type="ordered locus">SARI_03023</name>
</gene>
<dbReference type="EC" id="2.1.1.172" evidence="1"/>
<dbReference type="EMBL" id="CP000880">
    <property type="protein sequence ID" value="ABX22867.1"/>
    <property type="molecule type" value="Genomic_DNA"/>
</dbReference>
<dbReference type="SMR" id="A9MRB9"/>
<dbReference type="STRING" id="41514.SARI_03023"/>
<dbReference type="KEGG" id="ses:SARI_03023"/>
<dbReference type="HOGENOM" id="CLU_049581_0_1_6"/>
<dbReference type="Proteomes" id="UP000002084">
    <property type="component" value="Chromosome"/>
</dbReference>
<dbReference type="GO" id="GO:0005737">
    <property type="term" value="C:cytoplasm"/>
    <property type="evidence" value="ECO:0007669"/>
    <property type="project" value="UniProtKB-SubCell"/>
</dbReference>
<dbReference type="GO" id="GO:0052914">
    <property type="term" value="F:16S rRNA (guanine(1207)-N(2))-methyltransferase activity"/>
    <property type="evidence" value="ECO:0007669"/>
    <property type="project" value="UniProtKB-EC"/>
</dbReference>
<dbReference type="GO" id="GO:0003676">
    <property type="term" value="F:nucleic acid binding"/>
    <property type="evidence" value="ECO:0007669"/>
    <property type="project" value="InterPro"/>
</dbReference>
<dbReference type="CDD" id="cd02440">
    <property type="entry name" value="AdoMet_MTases"/>
    <property type="match status" value="1"/>
</dbReference>
<dbReference type="Gene3D" id="3.40.50.150">
    <property type="entry name" value="Vaccinia Virus protein VP39"/>
    <property type="match status" value="2"/>
</dbReference>
<dbReference type="HAMAP" id="MF_01862">
    <property type="entry name" value="16SrRNA_methyltr_C"/>
    <property type="match status" value="1"/>
</dbReference>
<dbReference type="InterPro" id="IPR002052">
    <property type="entry name" value="DNA_methylase_N6_adenine_CS"/>
</dbReference>
<dbReference type="InterPro" id="IPR013675">
    <property type="entry name" value="Mtase_sm_N"/>
</dbReference>
<dbReference type="InterPro" id="IPR023543">
    <property type="entry name" value="rRNA_ssu_MeTfrase_C"/>
</dbReference>
<dbReference type="InterPro" id="IPR046977">
    <property type="entry name" value="RsmC/RlmG"/>
</dbReference>
<dbReference type="InterPro" id="IPR029063">
    <property type="entry name" value="SAM-dependent_MTases_sf"/>
</dbReference>
<dbReference type="InterPro" id="IPR007848">
    <property type="entry name" value="Small_mtfrase_dom"/>
</dbReference>
<dbReference type="NCBIfam" id="NF007023">
    <property type="entry name" value="PRK09489.1"/>
    <property type="match status" value="1"/>
</dbReference>
<dbReference type="PANTHER" id="PTHR47816">
    <property type="entry name" value="RIBOSOMAL RNA SMALL SUBUNIT METHYLTRANSFERASE C"/>
    <property type="match status" value="1"/>
</dbReference>
<dbReference type="PANTHER" id="PTHR47816:SF4">
    <property type="entry name" value="RIBOSOMAL RNA SMALL SUBUNIT METHYLTRANSFERASE C"/>
    <property type="match status" value="1"/>
</dbReference>
<dbReference type="Pfam" id="PF05175">
    <property type="entry name" value="MTS"/>
    <property type="match status" value="1"/>
</dbReference>
<dbReference type="Pfam" id="PF08468">
    <property type="entry name" value="MTS_N"/>
    <property type="match status" value="1"/>
</dbReference>
<dbReference type="SUPFAM" id="SSF53335">
    <property type="entry name" value="S-adenosyl-L-methionine-dependent methyltransferases"/>
    <property type="match status" value="1"/>
</dbReference>
<protein>
    <recommendedName>
        <fullName evidence="1">Ribosomal RNA small subunit methyltransferase C</fullName>
        <ecNumber evidence="1">2.1.1.172</ecNumber>
    </recommendedName>
    <alternativeName>
        <fullName evidence="1">16S rRNA m2G1207 methyltransferase</fullName>
    </alternativeName>
    <alternativeName>
        <fullName evidence="1">rRNA (guanine-N(2)-)-methyltransferase RsmC</fullName>
    </alternativeName>
</protein>
<feature type="chain" id="PRO_0000369752" description="Ribosomal RNA small subunit methyltransferase C">
    <location>
        <begin position="1"/>
        <end position="342"/>
    </location>
</feature>
<keyword id="KW-0963">Cytoplasm</keyword>
<keyword id="KW-0489">Methyltransferase</keyword>
<keyword id="KW-1185">Reference proteome</keyword>
<keyword id="KW-0698">rRNA processing</keyword>
<keyword id="KW-0949">S-adenosyl-L-methionine</keyword>
<keyword id="KW-0808">Transferase</keyword>
<accession>A9MRB9</accession>
<proteinExistence type="inferred from homology"/>
<comment type="function">
    <text evidence="1">Specifically methylates the guanine in position 1207 of 16S rRNA in the 30S particle.</text>
</comment>
<comment type="catalytic activity">
    <reaction evidence="1">
        <text>guanosine(1207) in 16S rRNA + S-adenosyl-L-methionine = N(2)-methylguanosine(1207) in 16S rRNA + S-adenosyl-L-homocysteine + H(+)</text>
        <dbReference type="Rhea" id="RHEA:42736"/>
        <dbReference type="Rhea" id="RHEA-COMP:10213"/>
        <dbReference type="Rhea" id="RHEA-COMP:10214"/>
        <dbReference type="ChEBI" id="CHEBI:15378"/>
        <dbReference type="ChEBI" id="CHEBI:57856"/>
        <dbReference type="ChEBI" id="CHEBI:59789"/>
        <dbReference type="ChEBI" id="CHEBI:74269"/>
        <dbReference type="ChEBI" id="CHEBI:74481"/>
        <dbReference type="EC" id="2.1.1.172"/>
    </reaction>
</comment>
<comment type="subunit">
    <text evidence="1">Monomer.</text>
</comment>
<comment type="subcellular location">
    <subcellularLocation>
        <location evidence="1">Cytoplasm</location>
    </subcellularLocation>
</comment>
<comment type="similarity">
    <text evidence="1">Belongs to the methyltransferase superfamily. RsmC family.</text>
</comment>
<reference key="1">
    <citation type="submission" date="2007-11" db="EMBL/GenBank/DDBJ databases">
        <authorList>
            <consortium name="The Salmonella enterica serovar Arizonae Genome Sequencing Project"/>
            <person name="McClelland M."/>
            <person name="Sanderson E.K."/>
            <person name="Porwollik S."/>
            <person name="Spieth J."/>
            <person name="Clifton W.S."/>
            <person name="Fulton R."/>
            <person name="Chunyan W."/>
            <person name="Wollam A."/>
            <person name="Shah N."/>
            <person name="Pepin K."/>
            <person name="Bhonagiri V."/>
            <person name="Nash W."/>
            <person name="Johnson M."/>
            <person name="Thiruvilangam P."/>
            <person name="Wilson R."/>
        </authorList>
    </citation>
    <scope>NUCLEOTIDE SEQUENCE [LARGE SCALE GENOMIC DNA]</scope>
    <source>
        <strain>ATCC BAA-731 / CDC346-86 / RSK2980</strain>
    </source>
</reference>
<evidence type="ECO:0000255" key="1">
    <source>
        <dbReference type="HAMAP-Rule" id="MF_01862"/>
    </source>
</evidence>
<sequence length="342" mass="37680">MSAFTPASEVLLRHSDDFEQSRILFAGDLQDDLPARFECAASRAHTQQFHHWQVLSRQMGDNVRFSLVAQACDIADCDTLIYYWPKNKPEAQFQLMNILSLMPSGADIFVVGENRSGVRSAEQMLADYAPLNKVDSARRCGLYHGRLEKQPLFSLEPYWDEYSIDGLIIKTLPGVFSRDGLDVGSQLLLSTLTPHTKGKVLDVGCGAGVLSAALASHSPKVRLTLCDVSAPAVEASRATLAVNGLDGDVFASNVFSEVKGRFDMIISNPPFHDGMQTSLDAAQTLIRSAVRHLNSGGELRIVANAFLPYPKILDETFGFHDVIAQTGRFKVYRTVMTRQAKK</sequence>